<sequence>MQKKYFGTDGIRGKVGNSLINAEFMLKLGWAVGRVLANSHSATVLIGKDTRISGYMIESALQAGLSAAGVNIKLTGPMPTPAIAYLTHSVRADAGIVISASHNHYPDNGVKFFNKDGFKLSDELELAIEKQIDKPMKTVVADRLGKAARMNEAHGRYIEFCKSTFPSNLTLKGLKIVVDCANGAAYAVAPSIFHELGAEVVAIADDPDGFNINQTCGATDTAHLQEMVVKHNADVGIAFDGDGDRLIMVDHHGLRVDGDELLCIMAIDRFYLKENAPLGVVGTIMSNLGLEQTLKRHHIAFERSPVGDRYVLDLMQQKGWFLGGESSGHIVDLGFTTTGDGVITALQILRIMQQAEKPLADLKKVMVKHPQVLINVPIKGILDIAQNPNIKKAITEAEKQLNGAGRILLRPSGTEPVIRVMVEGSDEGIVRQTAEMLAAAVQQSTL</sequence>
<accession>B6IZD8</accession>
<evidence type="ECO:0000255" key="1">
    <source>
        <dbReference type="HAMAP-Rule" id="MF_01554"/>
    </source>
</evidence>
<gene>
    <name evidence="1" type="primary">glmM</name>
    <name type="ordered locus">CbuG_0661</name>
</gene>
<dbReference type="EC" id="5.4.2.10" evidence="1"/>
<dbReference type="EMBL" id="CP001019">
    <property type="protein sequence ID" value="ACJ18066.1"/>
    <property type="molecule type" value="Genomic_DNA"/>
</dbReference>
<dbReference type="RefSeq" id="WP_005770992.1">
    <property type="nucleotide sequence ID" value="NC_011527.1"/>
</dbReference>
<dbReference type="SMR" id="B6IZD8"/>
<dbReference type="KEGG" id="cbg:CbuG_0661"/>
<dbReference type="HOGENOM" id="CLU_016950_7_0_6"/>
<dbReference type="GO" id="GO:0005829">
    <property type="term" value="C:cytosol"/>
    <property type="evidence" value="ECO:0007669"/>
    <property type="project" value="TreeGrafter"/>
</dbReference>
<dbReference type="GO" id="GO:0000287">
    <property type="term" value="F:magnesium ion binding"/>
    <property type="evidence" value="ECO:0007669"/>
    <property type="project" value="UniProtKB-UniRule"/>
</dbReference>
<dbReference type="GO" id="GO:0008966">
    <property type="term" value="F:phosphoglucosamine mutase activity"/>
    <property type="evidence" value="ECO:0007669"/>
    <property type="project" value="UniProtKB-UniRule"/>
</dbReference>
<dbReference type="GO" id="GO:0004615">
    <property type="term" value="F:phosphomannomutase activity"/>
    <property type="evidence" value="ECO:0007669"/>
    <property type="project" value="TreeGrafter"/>
</dbReference>
<dbReference type="GO" id="GO:0005975">
    <property type="term" value="P:carbohydrate metabolic process"/>
    <property type="evidence" value="ECO:0007669"/>
    <property type="project" value="InterPro"/>
</dbReference>
<dbReference type="GO" id="GO:0009252">
    <property type="term" value="P:peptidoglycan biosynthetic process"/>
    <property type="evidence" value="ECO:0007669"/>
    <property type="project" value="TreeGrafter"/>
</dbReference>
<dbReference type="GO" id="GO:0006048">
    <property type="term" value="P:UDP-N-acetylglucosamine biosynthetic process"/>
    <property type="evidence" value="ECO:0007669"/>
    <property type="project" value="TreeGrafter"/>
</dbReference>
<dbReference type="CDD" id="cd05802">
    <property type="entry name" value="GlmM"/>
    <property type="match status" value="1"/>
</dbReference>
<dbReference type="FunFam" id="3.30.310.50:FF:000001">
    <property type="entry name" value="Phosphoglucosamine mutase"/>
    <property type="match status" value="1"/>
</dbReference>
<dbReference type="FunFam" id="3.40.120.10:FF:000001">
    <property type="entry name" value="Phosphoglucosamine mutase"/>
    <property type="match status" value="1"/>
</dbReference>
<dbReference type="FunFam" id="3.40.120.10:FF:000003">
    <property type="entry name" value="Phosphoglucosamine mutase"/>
    <property type="match status" value="1"/>
</dbReference>
<dbReference type="Gene3D" id="3.40.120.10">
    <property type="entry name" value="Alpha-D-Glucose-1,6-Bisphosphate, subunit A, domain 3"/>
    <property type="match status" value="3"/>
</dbReference>
<dbReference type="Gene3D" id="3.30.310.50">
    <property type="entry name" value="Alpha-D-phosphohexomutase, C-terminal domain"/>
    <property type="match status" value="1"/>
</dbReference>
<dbReference type="HAMAP" id="MF_01554_B">
    <property type="entry name" value="GlmM_B"/>
    <property type="match status" value="1"/>
</dbReference>
<dbReference type="InterPro" id="IPR005844">
    <property type="entry name" value="A-D-PHexomutase_a/b/a-I"/>
</dbReference>
<dbReference type="InterPro" id="IPR016055">
    <property type="entry name" value="A-D-PHexomutase_a/b/a-I/II/III"/>
</dbReference>
<dbReference type="InterPro" id="IPR005845">
    <property type="entry name" value="A-D-PHexomutase_a/b/a-II"/>
</dbReference>
<dbReference type="InterPro" id="IPR005846">
    <property type="entry name" value="A-D-PHexomutase_a/b/a-III"/>
</dbReference>
<dbReference type="InterPro" id="IPR005843">
    <property type="entry name" value="A-D-PHexomutase_C"/>
</dbReference>
<dbReference type="InterPro" id="IPR036900">
    <property type="entry name" value="A-D-PHexomutase_C_sf"/>
</dbReference>
<dbReference type="InterPro" id="IPR005841">
    <property type="entry name" value="Alpha-D-phosphohexomutase_SF"/>
</dbReference>
<dbReference type="InterPro" id="IPR006352">
    <property type="entry name" value="GlmM_bact"/>
</dbReference>
<dbReference type="InterPro" id="IPR050060">
    <property type="entry name" value="Phosphoglucosamine_mutase"/>
</dbReference>
<dbReference type="NCBIfam" id="TIGR01455">
    <property type="entry name" value="glmM"/>
    <property type="match status" value="1"/>
</dbReference>
<dbReference type="NCBIfam" id="NF008139">
    <property type="entry name" value="PRK10887.1"/>
    <property type="match status" value="1"/>
</dbReference>
<dbReference type="PANTHER" id="PTHR42946:SF1">
    <property type="entry name" value="PHOSPHOGLUCOMUTASE (ALPHA-D-GLUCOSE-1,6-BISPHOSPHATE-DEPENDENT)"/>
    <property type="match status" value="1"/>
</dbReference>
<dbReference type="PANTHER" id="PTHR42946">
    <property type="entry name" value="PHOSPHOHEXOSE MUTASE"/>
    <property type="match status" value="1"/>
</dbReference>
<dbReference type="Pfam" id="PF02878">
    <property type="entry name" value="PGM_PMM_I"/>
    <property type="match status" value="1"/>
</dbReference>
<dbReference type="Pfam" id="PF02879">
    <property type="entry name" value="PGM_PMM_II"/>
    <property type="match status" value="1"/>
</dbReference>
<dbReference type="Pfam" id="PF02880">
    <property type="entry name" value="PGM_PMM_III"/>
    <property type="match status" value="1"/>
</dbReference>
<dbReference type="Pfam" id="PF00408">
    <property type="entry name" value="PGM_PMM_IV"/>
    <property type="match status" value="1"/>
</dbReference>
<dbReference type="PRINTS" id="PR00509">
    <property type="entry name" value="PGMPMM"/>
</dbReference>
<dbReference type="SUPFAM" id="SSF55957">
    <property type="entry name" value="Phosphoglucomutase, C-terminal domain"/>
    <property type="match status" value="1"/>
</dbReference>
<dbReference type="SUPFAM" id="SSF53738">
    <property type="entry name" value="Phosphoglucomutase, first 3 domains"/>
    <property type="match status" value="3"/>
</dbReference>
<protein>
    <recommendedName>
        <fullName evidence="1">Phosphoglucosamine mutase</fullName>
        <ecNumber evidence="1">5.4.2.10</ecNumber>
    </recommendedName>
</protein>
<proteinExistence type="inferred from homology"/>
<organism>
    <name type="scientific">Coxiella burnetii (strain CbuG_Q212)</name>
    <name type="common">Coxiella burnetii (strain Q212)</name>
    <dbReference type="NCBI Taxonomy" id="434923"/>
    <lineage>
        <taxon>Bacteria</taxon>
        <taxon>Pseudomonadati</taxon>
        <taxon>Pseudomonadota</taxon>
        <taxon>Gammaproteobacteria</taxon>
        <taxon>Legionellales</taxon>
        <taxon>Coxiellaceae</taxon>
        <taxon>Coxiella</taxon>
    </lineage>
</organism>
<keyword id="KW-0413">Isomerase</keyword>
<keyword id="KW-0460">Magnesium</keyword>
<keyword id="KW-0479">Metal-binding</keyword>
<keyword id="KW-0597">Phosphoprotein</keyword>
<feature type="chain" id="PRO_1000201080" description="Phosphoglucosamine mutase">
    <location>
        <begin position="1"/>
        <end position="446"/>
    </location>
</feature>
<feature type="active site" description="Phosphoserine intermediate" evidence="1">
    <location>
        <position position="101"/>
    </location>
</feature>
<feature type="binding site" description="via phosphate group" evidence="1">
    <location>
        <position position="101"/>
    </location>
    <ligand>
        <name>Mg(2+)</name>
        <dbReference type="ChEBI" id="CHEBI:18420"/>
    </ligand>
</feature>
<feature type="binding site" evidence="1">
    <location>
        <position position="240"/>
    </location>
    <ligand>
        <name>Mg(2+)</name>
        <dbReference type="ChEBI" id="CHEBI:18420"/>
    </ligand>
</feature>
<feature type="binding site" evidence="1">
    <location>
        <position position="242"/>
    </location>
    <ligand>
        <name>Mg(2+)</name>
        <dbReference type="ChEBI" id="CHEBI:18420"/>
    </ligand>
</feature>
<feature type="binding site" evidence="1">
    <location>
        <position position="244"/>
    </location>
    <ligand>
        <name>Mg(2+)</name>
        <dbReference type="ChEBI" id="CHEBI:18420"/>
    </ligand>
</feature>
<feature type="modified residue" description="Phosphoserine" evidence="1">
    <location>
        <position position="101"/>
    </location>
</feature>
<reference key="1">
    <citation type="journal article" date="2009" name="Infect. Immun.">
        <title>Comparative genomics reveal extensive transposon-mediated genomic plasticity and diversity among potential effector proteins within the genus Coxiella.</title>
        <authorList>
            <person name="Beare P.A."/>
            <person name="Unsworth N."/>
            <person name="Andoh M."/>
            <person name="Voth D.E."/>
            <person name="Omsland A."/>
            <person name="Gilk S.D."/>
            <person name="Williams K.P."/>
            <person name="Sobral B.W."/>
            <person name="Kupko J.J. III"/>
            <person name="Porcella S.F."/>
            <person name="Samuel J.E."/>
            <person name="Heinzen R.A."/>
        </authorList>
    </citation>
    <scope>NUCLEOTIDE SEQUENCE [LARGE SCALE GENOMIC DNA]</scope>
    <source>
        <strain>CbuG_Q212</strain>
    </source>
</reference>
<name>GLMM_COXB2</name>
<comment type="function">
    <text evidence="1">Catalyzes the conversion of glucosamine-6-phosphate to glucosamine-1-phosphate.</text>
</comment>
<comment type="catalytic activity">
    <reaction evidence="1">
        <text>alpha-D-glucosamine 1-phosphate = D-glucosamine 6-phosphate</text>
        <dbReference type="Rhea" id="RHEA:23424"/>
        <dbReference type="ChEBI" id="CHEBI:58516"/>
        <dbReference type="ChEBI" id="CHEBI:58725"/>
        <dbReference type="EC" id="5.4.2.10"/>
    </reaction>
</comment>
<comment type="cofactor">
    <cofactor evidence="1">
        <name>Mg(2+)</name>
        <dbReference type="ChEBI" id="CHEBI:18420"/>
    </cofactor>
    <text evidence="1">Binds 1 Mg(2+) ion per subunit.</text>
</comment>
<comment type="PTM">
    <text evidence="1">Activated by phosphorylation.</text>
</comment>
<comment type="similarity">
    <text evidence="1">Belongs to the phosphohexose mutase family.</text>
</comment>